<name>KN7K_ARATH</name>
<protein>
    <recommendedName>
        <fullName evidence="5">Kinesin-like protein KIN-7K, chloroplastic</fullName>
    </recommendedName>
</protein>
<gene>
    <name evidence="5" type="primary">KIN7K</name>
    <name evidence="6" type="ordered locus">At3g12020</name>
    <name evidence="8" type="ORF">MEC18.15</name>
    <name evidence="7" type="ORF">T21B14.15</name>
</gene>
<comment type="subcellular location">
    <subcellularLocation>
        <location evidence="1">Plastid</location>
        <location evidence="1">Chloroplast</location>
    </subcellularLocation>
</comment>
<comment type="alternative products">
    <event type="alternative initiation"/>
    <isoform>
        <id>F4J8L3-1</id>
        <name>1</name>
        <sequence type="displayed"/>
    </isoform>
    <text>A number of isoforms are produced. According to EST sequences.</text>
</comment>
<comment type="similarity">
    <text evidence="4">Belongs to the TRAFAC class myosin-kinesin ATPase superfamily. Kinesin family. KIN-7 subfamily.</text>
</comment>
<comment type="sequence caution" evidence="5">
    <conflict type="erroneous gene model prediction">
        <sequence resource="EMBL-CDS" id="AAG51044"/>
    </conflict>
</comment>
<comment type="sequence caution" evidence="5">
    <conflict type="erroneous gene model prediction">
        <sequence resource="EMBL-CDS" id="BAB03114"/>
    </conflict>
</comment>
<comment type="sequence caution" evidence="5">
    <conflict type="erroneous initiation">
        <sequence resource="EMBL-CDS" id="BAC42213"/>
    </conflict>
    <text>Truncated N-terminus.</text>
</comment>
<keyword id="KW-0024">Alternative initiation</keyword>
<keyword id="KW-0067">ATP-binding</keyword>
<keyword id="KW-0150">Chloroplast</keyword>
<keyword id="KW-0175">Coiled coil</keyword>
<keyword id="KW-0493">Microtubule</keyword>
<keyword id="KW-0505">Motor protein</keyword>
<keyword id="KW-0547">Nucleotide-binding</keyword>
<keyword id="KW-0934">Plastid</keyword>
<keyword id="KW-1185">Reference proteome</keyword>
<keyword id="KW-0809">Transit peptide</keyword>
<reference key="1">
    <citation type="journal article" date="2000" name="DNA Res.">
        <title>Structural analysis of Arabidopsis thaliana chromosome 3. II. Sequence features of the 4,251,695 bp regions covered by 90 P1, TAC and BAC clones.</title>
        <authorList>
            <person name="Kaneko T."/>
            <person name="Katoh T."/>
            <person name="Sato S."/>
            <person name="Nakamura Y."/>
            <person name="Asamizu E."/>
            <person name="Tabata S."/>
        </authorList>
    </citation>
    <scope>NUCLEOTIDE SEQUENCE [LARGE SCALE GENOMIC DNA]</scope>
    <source>
        <strain>cv. Columbia</strain>
    </source>
</reference>
<reference key="2">
    <citation type="journal article" date="2000" name="Nature">
        <title>Sequence and analysis of chromosome 3 of the plant Arabidopsis thaliana.</title>
        <authorList>
            <person name="Salanoubat M."/>
            <person name="Lemcke K."/>
            <person name="Rieger M."/>
            <person name="Ansorge W."/>
            <person name="Unseld M."/>
            <person name="Fartmann B."/>
            <person name="Valle G."/>
            <person name="Bloecker H."/>
            <person name="Perez-Alonso M."/>
            <person name="Obermaier B."/>
            <person name="Delseny M."/>
            <person name="Boutry M."/>
            <person name="Grivell L.A."/>
            <person name="Mache R."/>
            <person name="Puigdomenech P."/>
            <person name="De Simone V."/>
            <person name="Choisne N."/>
            <person name="Artiguenave F."/>
            <person name="Robert C."/>
            <person name="Brottier P."/>
            <person name="Wincker P."/>
            <person name="Cattolico L."/>
            <person name="Weissenbach J."/>
            <person name="Saurin W."/>
            <person name="Quetier F."/>
            <person name="Schaefer M."/>
            <person name="Mueller-Auer S."/>
            <person name="Gabel C."/>
            <person name="Fuchs M."/>
            <person name="Benes V."/>
            <person name="Wurmbach E."/>
            <person name="Drzonek H."/>
            <person name="Erfle H."/>
            <person name="Jordan N."/>
            <person name="Bangert S."/>
            <person name="Wiedelmann R."/>
            <person name="Kranz H."/>
            <person name="Voss H."/>
            <person name="Holland R."/>
            <person name="Brandt P."/>
            <person name="Nyakatura G."/>
            <person name="Vezzi A."/>
            <person name="D'Angelo M."/>
            <person name="Pallavicini A."/>
            <person name="Toppo S."/>
            <person name="Simionati B."/>
            <person name="Conrad A."/>
            <person name="Hornischer K."/>
            <person name="Kauer G."/>
            <person name="Loehnert T.-H."/>
            <person name="Nordsiek G."/>
            <person name="Reichelt J."/>
            <person name="Scharfe M."/>
            <person name="Schoen O."/>
            <person name="Bargues M."/>
            <person name="Terol J."/>
            <person name="Climent J."/>
            <person name="Navarro P."/>
            <person name="Collado C."/>
            <person name="Perez-Perez A."/>
            <person name="Ottenwaelder B."/>
            <person name="Duchemin D."/>
            <person name="Cooke R."/>
            <person name="Laudie M."/>
            <person name="Berger-Llauro C."/>
            <person name="Purnelle B."/>
            <person name="Masuy D."/>
            <person name="de Haan M."/>
            <person name="Maarse A.C."/>
            <person name="Alcaraz J.-P."/>
            <person name="Cottet A."/>
            <person name="Casacuberta E."/>
            <person name="Monfort A."/>
            <person name="Argiriou A."/>
            <person name="Flores M."/>
            <person name="Liguori R."/>
            <person name="Vitale D."/>
            <person name="Mannhaupt G."/>
            <person name="Haase D."/>
            <person name="Schoof H."/>
            <person name="Rudd S."/>
            <person name="Zaccaria P."/>
            <person name="Mewes H.-W."/>
            <person name="Mayer K.F.X."/>
            <person name="Kaul S."/>
            <person name="Town C.D."/>
            <person name="Koo H.L."/>
            <person name="Tallon L.J."/>
            <person name="Jenkins J."/>
            <person name="Rooney T."/>
            <person name="Rizzo M."/>
            <person name="Walts A."/>
            <person name="Utterback T."/>
            <person name="Fujii C.Y."/>
            <person name="Shea T.P."/>
            <person name="Creasy T.H."/>
            <person name="Haas B."/>
            <person name="Maiti R."/>
            <person name="Wu D."/>
            <person name="Peterson J."/>
            <person name="Van Aken S."/>
            <person name="Pai G."/>
            <person name="Militscher J."/>
            <person name="Sellers P."/>
            <person name="Gill J.E."/>
            <person name="Feldblyum T.V."/>
            <person name="Preuss D."/>
            <person name="Lin X."/>
            <person name="Nierman W.C."/>
            <person name="Salzberg S.L."/>
            <person name="White O."/>
            <person name="Venter J.C."/>
            <person name="Fraser C.M."/>
            <person name="Kaneko T."/>
            <person name="Nakamura Y."/>
            <person name="Sato S."/>
            <person name="Kato T."/>
            <person name="Asamizu E."/>
            <person name="Sasamoto S."/>
            <person name="Kimura T."/>
            <person name="Idesawa K."/>
            <person name="Kawashima K."/>
            <person name="Kishida Y."/>
            <person name="Kiyokawa C."/>
            <person name="Kohara M."/>
            <person name="Matsumoto M."/>
            <person name="Matsuno A."/>
            <person name="Muraki A."/>
            <person name="Nakayama S."/>
            <person name="Nakazaki N."/>
            <person name="Shinpo S."/>
            <person name="Takeuchi C."/>
            <person name="Wada T."/>
            <person name="Watanabe A."/>
            <person name="Yamada M."/>
            <person name="Yasuda M."/>
            <person name="Tabata S."/>
        </authorList>
    </citation>
    <scope>NUCLEOTIDE SEQUENCE [LARGE SCALE GENOMIC DNA]</scope>
    <source>
        <strain>cv. Columbia</strain>
    </source>
</reference>
<reference key="3">
    <citation type="journal article" date="2017" name="Plant J.">
        <title>Araport11: a complete reannotation of the Arabidopsis thaliana reference genome.</title>
        <authorList>
            <person name="Cheng C.Y."/>
            <person name="Krishnakumar V."/>
            <person name="Chan A.P."/>
            <person name="Thibaud-Nissen F."/>
            <person name="Schobel S."/>
            <person name="Town C.D."/>
        </authorList>
    </citation>
    <scope>GENOME REANNOTATION</scope>
    <source>
        <strain>cv. Columbia</strain>
    </source>
</reference>
<reference key="4">
    <citation type="journal article" date="2002" name="Science">
        <title>Functional annotation of a full-length Arabidopsis cDNA collection.</title>
        <authorList>
            <person name="Seki M."/>
            <person name="Narusaka M."/>
            <person name="Kamiya A."/>
            <person name="Ishida J."/>
            <person name="Satou M."/>
            <person name="Sakurai T."/>
            <person name="Nakajima M."/>
            <person name="Enju A."/>
            <person name="Akiyama K."/>
            <person name="Oono Y."/>
            <person name="Muramatsu M."/>
            <person name="Hayashizaki Y."/>
            <person name="Kawai J."/>
            <person name="Carninci P."/>
            <person name="Itoh M."/>
            <person name="Ishii Y."/>
            <person name="Arakawa T."/>
            <person name="Shibata K."/>
            <person name="Shinagawa A."/>
            <person name="Shinozaki K."/>
        </authorList>
    </citation>
    <scope>NUCLEOTIDE SEQUENCE [LARGE SCALE MRNA] OF 424-965</scope>
    <source>
        <strain>cv. Columbia</strain>
    </source>
</reference>
<reference key="5">
    <citation type="journal article" date="2001" name="BMC Genomics">
        <title>Kinesins in the Arabidopsis genome: a comparative analysis among eukaryotes.</title>
        <authorList>
            <person name="Reddy A.S."/>
            <person name="Day I.S."/>
        </authorList>
    </citation>
    <scope>GENE FAMILY</scope>
</reference>
<reference key="6">
    <citation type="journal article" date="2006" name="BMC Genomics">
        <title>Comprehensive comparative analysis of kinesins in photosynthetic eukaryotes.</title>
        <authorList>
            <person name="Richardson D.N."/>
            <person name="Simmons M.P."/>
            <person name="Reddy A.S."/>
        </authorList>
    </citation>
    <scope>GENE FAMILY</scope>
    <scope>NOMENCLATURE</scope>
</reference>
<reference key="7">
    <citation type="journal article" date="2012" name="Protoplasma">
        <title>Functions of the Arabidopsis kinesin superfamily of microtubule-based motor proteins.</title>
        <authorList>
            <person name="Zhu C."/>
            <person name="Dixit R."/>
        </authorList>
    </citation>
    <scope>REVIEW</scope>
</reference>
<evidence type="ECO:0000255" key="1"/>
<evidence type="ECO:0000255" key="2">
    <source>
        <dbReference type="PROSITE-ProRule" id="PRU00283"/>
    </source>
</evidence>
<evidence type="ECO:0000256" key="3">
    <source>
        <dbReference type="SAM" id="MobiDB-lite"/>
    </source>
</evidence>
<evidence type="ECO:0000303" key="4">
    <source>
    </source>
</evidence>
<evidence type="ECO:0000305" key="5"/>
<evidence type="ECO:0000312" key="6">
    <source>
        <dbReference type="Araport" id="AT3G12020"/>
    </source>
</evidence>
<evidence type="ECO:0000312" key="7">
    <source>
        <dbReference type="EMBL" id="AAG51044.1"/>
    </source>
</evidence>
<evidence type="ECO:0000312" key="8">
    <source>
        <dbReference type="EMBL" id="BAB03114.1"/>
    </source>
</evidence>
<feature type="transit peptide" description="Chloroplast" evidence="1">
    <location>
        <begin position="1"/>
        <end status="unknown"/>
    </location>
</feature>
<feature type="chain" id="PRO_0000436469" description="Kinesin-like protein KIN-7K, chloroplastic">
    <location>
        <begin status="unknown"/>
        <end position="965"/>
    </location>
</feature>
<feature type="domain" description="Kinesin motor" evidence="2">
    <location>
        <begin position="69"/>
        <end position="388"/>
    </location>
</feature>
<feature type="region of interest" description="Disordered" evidence="3">
    <location>
        <begin position="1"/>
        <end position="69"/>
    </location>
</feature>
<feature type="region of interest" description="Disordered" evidence="3">
    <location>
        <begin position="551"/>
        <end position="633"/>
    </location>
</feature>
<feature type="region of interest" description="Disordered" evidence="3">
    <location>
        <begin position="842"/>
        <end position="888"/>
    </location>
</feature>
<feature type="region of interest" description="Disordered" evidence="3">
    <location>
        <begin position="942"/>
        <end position="965"/>
    </location>
</feature>
<feature type="coiled-coil region" evidence="1">
    <location>
        <begin position="389"/>
        <end position="483"/>
    </location>
</feature>
<feature type="coiled-coil region" evidence="1">
    <location>
        <begin position="628"/>
        <end position="703"/>
    </location>
</feature>
<feature type="coiled-coil region" evidence="1">
    <location>
        <begin position="738"/>
        <end position="846"/>
    </location>
</feature>
<feature type="coiled-coil region" evidence="1">
    <location>
        <begin position="896"/>
        <end position="931"/>
    </location>
</feature>
<feature type="compositionally biased region" description="Low complexity" evidence="3">
    <location>
        <begin position="19"/>
        <end position="28"/>
    </location>
</feature>
<feature type="compositionally biased region" description="Polar residues" evidence="3">
    <location>
        <begin position="29"/>
        <end position="38"/>
    </location>
</feature>
<feature type="compositionally biased region" description="Low complexity" evidence="3">
    <location>
        <begin position="40"/>
        <end position="56"/>
    </location>
</feature>
<feature type="compositionally biased region" description="Basic residues" evidence="3">
    <location>
        <begin position="551"/>
        <end position="561"/>
    </location>
</feature>
<feature type="compositionally biased region" description="Low complexity" evidence="3">
    <location>
        <begin position="564"/>
        <end position="577"/>
    </location>
</feature>
<feature type="compositionally biased region" description="Basic and acidic residues" evidence="3">
    <location>
        <begin position="606"/>
        <end position="623"/>
    </location>
</feature>
<feature type="compositionally biased region" description="Low complexity" evidence="3">
    <location>
        <begin position="851"/>
        <end position="862"/>
    </location>
</feature>
<feature type="compositionally biased region" description="Basic and acidic residues" evidence="3">
    <location>
        <begin position="864"/>
        <end position="888"/>
    </location>
</feature>
<feature type="compositionally biased region" description="Polar residues" evidence="3">
    <location>
        <begin position="949"/>
        <end position="965"/>
    </location>
</feature>
<feature type="binding site" evidence="2">
    <location>
        <begin position="149"/>
        <end position="156"/>
    </location>
    <ligand>
        <name>ATP</name>
        <dbReference type="ChEBI" id="CHEBI:30616"/>
    </ligand>
</feature>
<sequence length="965" mass="108467">MASRQGSKSRKAGLKGADSTASSTTSSSKLYQETSIDGHSSPASSSAQSKQQFFSPDPLPQTAQRSKENVTVTVRFRPLSPREIRQGEEVAWYADGETIVRNEHNPTIAYAYDRVFGPTTTTRNVYDIAAHHVVNGAMEGINGTIFAYGVTSSGKTHTMHGDQRSPGIIPLAVKDAFSIIQETPNREFLLRISYMEIYNEVVNDLLNPAGHNLRIREDKQGTFVEGIKEEVVLSPAHALSLIAAGEEQRHVGSTNFNLLSSRSHTIFTLTIESSPLGDKSKGEAVHLSQLNLVDLAGSESSKVETSGVRRKEGSYINKSLLTLGTVISKLTDVRASHVPYRDSKLTRILQSSLSGHDRVSLICTVTPASSSSEETHNTLKFAHRAKHIEIQAEQNKIIDEKSLIKKYQREIRQLKEELEQLKQEIVPVPQLKDIGADDIVLLKQKLEDGQVKLQSRLEEEEEAKAALLSRIQRLTKLILVSTKNPQASRLPHRFNPRRRHSFGEEELAYLPYKRRDMMDDEQLDLYVSVEGNHEIRDNAYREEKKTRKHGLLNWLKPKKRDHSSSASDQSSVVKSNSTPSTPQGGGSHLHTESRLSEGSPLMEQLSEPREDREALEDSSHEMEIPETSNKMSDELDLLREQKKILSEEAALQLSSLKRMSDEAAKSPQNEEINEEIKVLNDDIKAKNDQIATLERQIMDFVMTSHEALDKSDIMQAVAELRDQLNEKSFELEVKAADNRIIQQTLNEKTCECEVLQEEVANLKQQLSEALELAQGTKIKELKQDAKELSESKEQLELRNRKLAEESSYAKGLASAAAVELKALSEEVAKLMNQNERLAAELATQKSPIAQRNKTGTTTNVRNNGRRESLAKRQEHDSPSMELKRELRMSKERELSYEAALGEKEQREAELERILEETKQREAYLENELANMWVLVSKLRRSQGADSEISDSISETRQTEQTEGSF</sequence>
<accession>F4J8L3</accession>
<accession>Q8GYK5</accession>
<accession>Q9C7B9</accession>
<accession>Q9LHL9</accession>
<dbReference type="EMBL" id="AP002040">
    <property type="protein sequence ID" value="BAB03114.1"/>
    <property type="status" value="ALT_SEQ"/>
    <property type="molecule type" value="Genomic_DNA"/>
</dbReference>
<dbReference type="EMBL" id="AC069473">
    <property type="protein sequence ID" value="AAG51044.1"/>
    <property type="status" value="ALT_SEQ"/>
    <property type="molecule type" value="Genomic_DNA"/>
</dbReference>
<dbReference type="EMBL" id="CP002686">
    <property type="protein sequence ID" value="AEE75137.1"/>
    <property type="molecule type" value="Genomic_DNA"/>
</dbReference>
<dbReference type="EMBL" id="CP002686">
    <property type="protein sequence ID" value="ANM63541.1"/>
    <property type="molecule type" value="Genomic_DNA"/>
</dbReference>
<dbReference type="EMBL" id="AK117552">
    <property type="protein sequence ID" value="BAC42213.1"/>
    <property type="status" value="ALT_INIT"/>
    <property type="molecule type" value="mRNA"/>
</dbReference>
<dbReference type="RefSeq" id="NP_001325623.1">
    <molecule id="F4J8L3-1"/>
    <property type="nucleotide sequence ID" value="NM_001337970.1"/>
</dbReference>
<dbReference type="RefSeq" id="NP_187809.3">
    <molecule id="F4J8L3-1"/>
    <property type="nucleotide sequence ID" value="NM_112036.4"/>
</dbReference>
<dbReference type="SMR" id="F4J8L3"/>
<dbReference type="FunCoup" id="F4J8L3">
    <property type="interactions" value="785"/>
</dbReference>
<dbReference type="STRING" id="3702.F4J8L3"/>
<dbReference type="GlyGen" id="F4J8L3">
    <property type="glycosylation" value="2 sites"/>
</dbReference>
<dbReference type="iPTMnet" id="F4J8L3"/>
<dbReference type="PaxDb" id="3702-AT3G12020.2"/>
<dbReference type="ProteomicsDB" id="250762">
    <molecule id="F4J8L3-1"/>
</dbReference>
<dbReference type="EnsemblPlants" id="AT3G12020.1">
    <molecule id="F4J8L3-1"/>
    <property type="protein sequence ID" value="AT3G12020.1"/>
    <property type="gene ID" value="AT3G12020"/>
</dbReference>
<dbReference type="EnsemblPlants" id="AT3G12020.4">
    <molecule id="F4J8L3-1"/>
    <property type="protein sequence ID" value="AT3G12020.4"/>
    <property type="gene ID" value="AT3G12020"/>
</dbReference>
<dbReference type="GeneID" id="820376"/>
<dbReference type="Gramene" id="AT3G12020.1">
    <molecule id="F4J8L3-1"/>
    <property type="protein sequence ID" value="AT3G12020.1"/>
    <property type="gene ID" value="AT3G12020"/>
</dbReference>
<dbReference type="Gramene" id="AT3G12020.4">
    <molecule id="F4J8L3-1"/>
    <property type="protein sequence ID" value="AT3G12020.4"/>
    <property type="gene ID" value="AT3G12020"/>
</dbReference>
<dbReference type="KEGG" id="ath:AT3G12020"/>
<dbReference type="Araport" id="AT3G12020"/>
<dbReference type="TAIR" id="AT3G12020">
    <property type="gene designation" value="KIN7.3"/>
</dbReference>
<dbReference type="eggNOG" id="KOG0242">
    <property type="taxonomic scope" value="Eukaryota"/>
</dbReference>
<dbReference type="HOGENOM" id="CLU_004957_0_0_1"/>
<dbReference type="InParanoid" id="F4J8L3"/>
<dbReference type="OMA" id="NEKTTEC"/>
<dbReference type="PRO" id="PR:F4J8L3"/>
<dbReference type="Proteomes" id="UP000006548">
    <property type="component" value="Chromosome 3"/>
</dbReference>
<dbReference type="ExpressionAtlas" id="F4J8L3">
    <property type="expression patterns" value="baseline and differential"/>
</dbReference>
<dbReference type="GO" id="GO:0009507">
    <property type="term" value="C:chloroplast"/>
    <property type="evidence" value="ECO:0007669"/>
    <property type="project" value="UniProtKB-SubCell"/>
</dbReference>
<dbReference type="GO" id="GO:0005874">
    <property type="term" value="C:microtubule"/>
    <property type="evidence" value="ECO:0007669"/>
    <property type="project" value="UniProtKB-KW"/>
</dbReference>
<dbReference type="GO" id="GO:0005524">
    <property type="term" value="F:ATP binding"/>
    <property type="evidence" value="ECO:0007669"/>
    <property type="project" value="UniProtKB-KW"/>
</dbReference>
<dbReference type="GO" id="GO:0008017">
    <property type="term" value="F:microtubule binding"/>
    <property type="evidence" value="ECO:0007669"/>
    <property type="project" value="InterPro"/>
</dbReference>
<dbReference type="GO" id="GO:0003777">
    <property type="term" value="F:microtubule motor activity"/>
    <property type="evidence" value="ECO:0007669"/>
    <property type="project" value="InterPro"/>
</dbReference>
<dbReference type="GO" id="GO:0007018">
    <property type="term" value="P:microtubule-based movement"/>
    <property type="evidence" value="ECO:0007669"/>
    <property type="project" value="InterPro"/>
</dbReference>
<dbReference type="CDD" id="cd01374">
    <property type="entry name" value="KISc_CENP_E"/>
    <property type="match status" value="1"/>
</dbReference>
<dbReference type="FunFam" id="3.40.850.10:FF:000014">
    <property type="entry name" value="Kinesin-like protein KIN-7G"/>
    <property type="match status" value="1"/>
</dbReference>
<dbReference type="Gene3D" id="3.40.850.10">
    <property type="entry name" value="Kinesin motor domain"/>
    <property type="match status" value="1"/>
</dbReference>
<dbReference type="InterPro" id="IPR027640">
    <property type="entry name" value="Kinesin-like_fam"/>
</dbReference>
<dbReference type="InterPro" id="IPR019821">
    <property type="entry name" value="Kinesin_motor_CS"/>
</dbReference>
<dbReference type="InterPro" id="IPR001752">
    <property type="entry name" value="Kinesin_motor_dom"/>
</dbReference>
<dbReference type="InterPro" id="IPR036961">
    <property type="entry name" value="Kinesin_motor_dom_sf"/>
</dbReference>
<dbReference type="InterPro" id="IPR027417">
    <property type="entry name" value="P-loop_NTPase"/>
</dbReference>
<dbReference type="PANTHER" id="PTHR47968">
    <property type="entry name" value="CENTROMERE PROTEIN E"/>
    <property type="match status" value="1"/>
</dbReference>
<dbReference type="PANTHER" id="PTHR47968:SF9">
    <property type="entry name" value="KINESIN-LIKE PROTEIN KIN-7K, CHLOROPLASTIC ISOFORM X1"/>
    <property type="match status" value="1"/>
</dbReference>
<dbReference type="Pfam" id="PF00225">
    <property type="entry name" value="Kinesin"/>
    <property type="match status" value="1"/>
</dbReference>
<dbReference type="PRINTS" id="PR00380">
    <property type="entry name" value="KINESINHEAVY"/>
</dbReference>
<dbReference type="SMART" id="SM00129">
    <property type="entry name" value="KISc"/>
    <property type="match status" value="1"/>
</dbReference>
<dbReference type="SUPFAM" id="SSF52540">
    <property type="entry name" value="P-loop containing nucleoside triphosphate hydrolases"/>
    <property type="match status" value="1"/>
</dbReference>
<dbReference type="PROSITE" id="PS00411">
    <property type="entry name" value="KINESIN_MOTOR_1"/>
    <property type="match status" value="1"/>
</dbReference>
<dbReference type="PROSITE" id="PS50067">
    <property type="entry name" value="KINESIN_MOTOR_2"/>
    <property type="match status" value="1"/>
</dbReference>
<proteinExistence type="evidence at transcript level"/>
<organism>
    <name type="scientific">Arabidopsis thaliana</name>
    <name type="common">Mouse-ear cress</name>
    <dbReference type="NCBI Taxonomy" id="3702"/>
    <lineage>
        <taxon>Eukaryota</taxon>
        <taxon>Viridiplantae</taxon>
        <taxon>Streptophyta</taxon>
        <taxon>Embryophyta</taxon>
        <taxon>Tracheophyta</taxon>
        <taxon>Spermatophyta</taxon>
        <taxon>Magnoliopsida</taxon>
        <taxon>eudicotyledons</taxon>
        <taxon>Gunneridae</taxon>
        <taxon>Pentapetalae</taxon>
        <taxon>rosids</taxon>
        <taxon>malvids</taxon>
        <taxon>Brassicales</taxon>
        <taxon>Brassicaceae</taxon>
        <taxon>Camelineae</taxon>
        <taxon>Arabidopsis</taxon>
    </lineage>
</organism>